<evidence type="ECO:0000250" key="1"/>
<evidence type="ECO:0000250" key="2">
    <source>
        <dbReference type="UniProtKB" id="Q8N6M0"/>
    </source>
</evidence>
<evidence type="ECO:0000255" key="3">
    <source>
        <dbReference type="PROSITE-ProRule" id="PRU00139"/>
    </source>
</evidence>
<evidence type="ECO:0000256" key="4">
    <source>
        <dbReference type="SAM" id="MobiDB-lite"/>
    </source>
</evidence>
<evidence type="ECO:0000305" key="5"/>
<sequence>MEGSEDEEAEAGGPLQQLVKRQRREKRELQAKIQGMKNAVPKNDKKRRKQLAEEVAKLEAELEQKHKEELKQLKEAMPEQNKIDSIADGVANFELEGREQQIQHPRISKAQKRREKKAALEKEREERIAEAEIENLTGARHLESQKLASLLAARHLEIKQIPSDGHCMYRAIEDQLKDHHNSWTVATLRNQTAKYIHSHFDDFLPFLTNPNTGDMYSKEEFEKYCDDIANTAAWGGQLELRALSHILQTPIEVVQMDSPSIIVGEEYSGKPIILVYMRHAYGLGEHYNSVKLLTDATTENGS</sequence>
<comment type="function">
    <text evidence="2">Deubiquitinating enzyme that may play a role in the ubiquitin-dependent regulation of different cellular processes.</text>
</comment>
<comment type="catalytic activity">
    <reaction evidence="2">
        <text>Thiol-dependent hydrolysis of ester, thioester, amide, peptide and isopeptide bonds formed by the C-terminal Gly of ubiquitin (a 76-residue protein attached to proteins as an intracellular targeting signal).</text>
        <dbReference type="EC" id="3.4.19.12"/>
    </reaction>
</comment>
<feature type="chain" id="PRO_0000076281" description="Deubiquitinase OTUD6B">
    <location>
        <begin position="1"/>
        <end position="302"/>
    </location>
</feature>
<feature type="domain" description="OTU" evidence="3">
    <location>
        <begin position="156"/>
        <end position="293"/>
    </location>
</feature>
<feature type="region of interest" description="Disordered" evidence="4">
    <location>
        <begin position="1"/>
        <end position="52"/>
    </location>
</feature>
<feature type="region of interest" description="Disordered" evidence="4">
    <location>
        <begin position="99"/>
        <end position="121"/>
    </location>
</feature>
<feature type="region of interest" description="Cys-loop" evidence="1">
    <location>
        <begin position="161"/>
        <end position="167"/>
    </location>
</feature>
<feature type="region of interest" description="Variable-loop" evidence="1">
    <location>
        <begin position="228"/>
        <end position="238"/>
    </location>
</feature>
<feature type="region of interest" description="His-loop" evidence="1">
    <location>
        <begin position="276"/>
        <end position="286"/>
    </location>
</feature>
<feature type="compositionally biased region" description="Acidic residues" evidence="4">
    <location>
        <begin position="1"/>
        <end position="10"/>
    </location>
</feature>
<feature type="compositionally biased region" description="Basic residues" evidence="4">
    <location>
        <begin position="106"/>
        <end position="116"/>
    </location>
</feature>
<feature type="active site" evidence="1">
    <location>
        <position position="164"/>
    </location>
</feature>
<feature type="active site" description="Nucleophile" evidence="2">
    <location>
        <position position="167"/>
    </location>
</feature>
<feature type="active site" evidence="1">
    <location>
        <position position="286"/>
    </location>
</feature>
<name>OTU6B_CHICK</name>
<keyword id="KW-0378">Hydrolase</keyword>
<keyword id="KW-0645">Protease</keyword>
<keyword id="KW-1185">Reference proteome</keyword>
<keyword id="KW-0788">Thiol protease</keyword>
<keyword id="KW-0833">Ubl conjugation pathway</keyword>
<protein>
    <recommendedName>
        <fullName evidence="5">Deubiquitinase OTUD6B</fullName>
        <ecNumber evidence="2">3.4.19.12</ecNumber>
    </recommendedName>
</protein>
<organism>
    <name type="scientific">Gallus gallus</name>
    <name type="common">Chicken</name>
    <dbReference type="NCBI Taxonomy" id="9031"/>
    <lineage>
        <taxon>Eukaryota</taxon>
        <taxon>Metazoa</taxon>
        <taxon>Chordata</taxon>
        <taxon>Craniata</taxon>
        <taxon>Vertebrata</taxon>
        <taxon>Euteleostomi</taxon>
        <taxon>Archelosauria</taxon>
        <taxon>Archosauria</taxon>
        <taxon>Dinosauria</taxon>
        <taxon>Saurischia</taxon>
        <taxon>Theropoda</taxon>
        <taxon>Coelurosauria</taxon>
        <taxon>Aves</taxon>
        <taxon>Neognathae</taxon>
        <taxon>Galloanserae</taxon>
        <taxon>Galliformes</taxon>
        <taxon>Phasianidae</taxon>
        <taxon>Phasianinae</taxon>
        <taxon>Gallus</taxon>
    </lineage>
</organism>
<reference key="1">
    <citation type="journal article" date="2005" name="Genome Biol.">
        <title>Full-length cDNAs from chicken bursal lymphocytes to facilitate gene function analysis.</title>
        <authorList>
            <person name="Caldwell R.B."/>
            <person name="Kierzek A.M."/>
            <person name="Arakawa H."/>
            <person name="Bezzubov Y."/>
            <person name="Zaim J."/>
            <person name="Fiedler P."/>
            <person name="Kutter S."/>
            <person name="Blagodatski A."/>
            <person name="Kostovska D."/>
            <person name="Koter M."/>
            <person name="Plachy J."/>
            <person name="Carninci P."/>
            <person name="Hayashizaki Y."/>
            <person name="Buerstedde J.-M."/>
        </authorList>
    </citation>
    <scope>NUCLEOTIDE SEQUENCE [LARGE SCALE MRNA]</scope>
    <source>
        <strain>CB</strain>
        <tissue>Bursa of Fabricius</tissue>
    </source>
</reference>
<dbReference type="EC" id="3.4.19.12" evidence="2"/>
<dbReference type="EMBL" id="AJ720738">
    <property type="protein sequence ID" value="CAG32397.1"/>
    <property type="molecule type" value="mRNA"/>
</dbReference>
<dbReference type="RefSeq" id="NP_001006347.1">
    <property type="nucleotide sequence ID" value="NM_001006347.1"/>
</dbReference>
<dbReference type="SMR" id="Q5ZIP6"/>
<dbReference type="FunCoup" id="Q5ZIP6">
    <property type="interactions" value="1519"/>
</dbReference>
<dbReference type="STRING" id="9031.ENSGALP00000058469"/>
<dbReference type="MEROPS" id="C85.008"/>
<dbReference type="PaxDb" id="9031-ENSGALP00000025612"/>
<dbReference type="Ensembl" id="ENSGALT00010026542.1">
    <property type="protein sequence ID" value="ENSGALP00010015119.1"/>
    <property type="gene ID" value="ENSGALG00010011086.1"/>
</dbReference>
<dbReference type="GeneID" id="420222"/>
<dbReference type="KEGG" id="gga:420222"/>
<dbReference type="CTD" id="139562"/>
<dbReference type="VEuPathDB" id="HostDB:geneid_420222"/>
<dbReference type="eggNOG" id="KOG2606">
    <property type="taxonomic scope" value="Eukaryota"/>
</dbReference>
<dbReference type="GeneTree" id="ENSGT00390000012840"/>
<dbReference type="HOGENOM" id="CLU_034963_0_0_1"/>
<dbReference type="InParanoid" id="Q5ZIP6"/>
<dbReference type="OMA" id="YELGAHY"/>
<dbReference type="OrthoDB" id="415023at2759"/>
<dbReference type="PhylomeDB" id="Q5ZIP6"/>
<dbReference type="TreeFam" id="TF315010"/>
<dbReference type="PRO" id="PR:Q5ZIP6"/>
<dbReference type="Proteomes" id="UP000000539">
    <property type="component" value="Chromosome 2"/>
</dbReference>
<dbReference type="Bgee" id="ENSGALG00000041337">
    <property type="expression patterns" value="Expressed in muscle tissue and 14 other cell types or tissues"/>
</dbReference>
<dbReference type="GO" id="GO:0016281">
    <property type="term" value="C:eukaryotic translation initiation factor 4F complex"/>
    <property type="evidence" value="ECO:0007669"/>
    <property type="project" value="Ensembl"/>
</dbReference>
<dbReference type="GO" id="GO:0004843">
    <property type="term" value="F:cysteine-type deubiquitinase activity"/>
    <property type="evidence" value="ECO:0000250"/>
    <property type="project" value="UniProtKB"/>
</dbReference>
<dbReference type="GO" id="GO:0008283">
    <property type="term" value="P:cell population proliferation"/>
    <property type="evidence" value="ECO:0007669"/>
    <property type="project" value="Ensembl"/>
</dbReference>
<dbReference type="GO" id="GO:0043248">
    <property type="term" value="P:proteasome assembly"/>
    <property type="evidence" value="ECO:0007669"/>
    <property type="project" value="Ensembl"/>
</dbReference>
<dbReference type="GO" id="GO:0016579">
    <property type="term" value="P:protein deubiquitination"/>
    <property type="evidence" value="ECO:0000250"/>
    <property type="project" value="UniProtKB"/>
</dbReference>
<dbReference type="GO" id="GO:0006508">
    <property type="term" value="P:proteolysis"/>
    <property type="evidence" value="ECO:0007669"/>
    <property type="project" value="UniProtKB-KW"/>
</dbReference>
<dbReference type="CDD" id="cd22761">
    <property type="entry name" value="OTU_OTUD6"/>
    <property type="match status" value="1"/>
</dbReference>
<dbReference type="FunFam" id="3.90.70.80:FF:000003">
    <property type="entry name" value="OTU domain-containing protein 6B"/>
    <property type="match status" value="1"/>
</dbReference>
<dbReference type="Gene3D" id="3.90.70.80">
    <property type="match status" value="1"/>
</dbReference>
<dbReference type="InterPro" id="IPR003323">
    <property type="entry name" value="OTU_dom"/>
</dbReference>
<dbReference type="InterPro" id="IPR049772">
    <property type="entry name" value="OTU_OTUD6"/>
</dbReference>
<dbReference type="InterPro" id="IPR038765">
    <property type="entry name" value="Papain-like_cys_pep_sf"/>
</dbReference>
<dbReference type="InterPro" id="IPR050704">
    <property type="entry name" value="Peptidase_C85-like"/>
</dbReference>
<dbReference type="PANTHER" id="PTHR12419:SF10">
    <property type="entry name" value="DEUBIQUITINASE OTUD6B"/>
    <property type="match status" value="1"/>
</dbReference>
<dbReference type="PANTHER" id="PTHR12419">
    <property type="entry name" value="OTU DOMAIN CONTAINING PROTEIN"/>
    <property type="match status" value="1"/>
</dbReference>
<dbReference type="Pfam" id="PF02338">
    <property type="entry name" value="OTU"/>
    <property type="match status" value="1"/>
</dbReference>
<dbReference type="SUPFAM" id="SSF54001">
    <property type="entry name" value="Cysteine proteinases"/>
    <property type="match status" value="1"/>
</dbReference>
<dbReference type="PROSITE" id="PS50802">
    <property type="entry name" value="OTU"/>
    <property type="match status" value="1"/>
</dbReference>
<accession>Q5ZIP6</accession>
<proteinExistence type="evidence at transcript level"/>
<gene>
    <name type="primary">OTUD6B</name>
    <name type="ORF">RCJMB04_24h18</name>
</gene>